<sequence>MYMQVESRTGTLLHLKRNPSIRSWSLLVGILSVGLAAAYYSTDTWLWKLFYVAGCAFVALQNLEDWEEAVFDKKSGKAILTTYSIYKKLLTLCKGGQDQVVVLLKEIRDVNVAEERVRYFGKGYVIVLRFVTGISHPLTQSAVLGARSDVEAVAKELTKFLELDLVRTRSQAVEESSDSESDGALDKQ</sequence>
<keyword id="KW-0143">Chaperone</keyword>
<keyword id="KW-0256">Endoplasmic reticulum</keyword>
<keyword id="KW-0391">Immunity</keyword>
<keyword id="KW-0399">Innate immunity</keyword>
<keyword id="KW-0472">Membrane</keyword>
<keyword id="KW-1185">Reference proteome</keyword>
<keyword id="KW-0812">Transmembrane</keyword>
<keyword id="KW-1133">Transmembrane helix</keyword>
<name>CYBC1_XENLA</name>
<accession>Q5HZS2</accession>
<evidence type="ECO:0000250" key="1">
    <source>
        <dbReference type="UniProtKB" id="Q3TYS2"/>
    </source>
</evidence>
<evidence type="ECO:0000250" key="2">
    <source>
        <dbReference type="UniProtKB" id="Q9BQA9"/>
    </source>
</evidence>
<evidence type="ECO:0000255" key="3"/>
<evidence type="ECO:0000305" key="4"/>
<feature type="chain" id="PRO_0000281422" description="Cytochrome b-245 chaperone 1 homolog">
    <location>
        <begin position="1"/>
        <end position="188"/>
    </location>
</feature>
<feature type="transmembrane region" description="Helical" evidence="3">
    <location>
        <begin position="20"/>
        <end position="42"/>
    </location>
</feature>
<comment type="function">
    <text evidence="2">Functions as a chaperone necessary for a stable expression of the CYBA and CYBB subunits of the cytochrome b-245 heterodimer.</text>
</comment>
<comment type="subcellular location">
    <subcellularLocation>
        <location evidence="2">Endoplasmic reticulum membrane</location>
        <topology evidence="4">Single-pass membrane protein</topology>
    </subcellularLocation>
</comment>
<comment type="similarity">
    <text>Belongs to the CYBC1 family.</text>
</comment>
<proteinExistence type="evidence at transcript level"/>
<organism>
    <name type="scientific">Xenopus laevis</name>
    <name type="common">African clawed frog</name>
    <dbReference type="NCBI Taxonomy" id="8355"/>
    <lineage>
        <taxon>Eukaryota</taxon>
        <taxon>Metazoa</taxon>
        <taxon>Chordata</taxon>
        <taxon>Craniata</taxon>
        <taxon>Vertebrata</taxon>
        <taxon>Euteleostomi</taxon>
        <taxon>Amphibia</taxon>
        <taxon>Batrachia</taxon>
        <taxon>Anura</taxon>
        <taxon>Pipoidea</taxon>
        <taxon>Pipidae</taxon>
        <taxon>Xenopodinae</taxon>
        <taxon>Xenopus</taxon>
        <taxon>Xenopus</taxon>
    </lineage>
</organism>
<reference key="1">
    <citation type="submission" date="2005-01" db="EMBL/GenBank/DDBJ databases">
        <authorList>
            <consortium name="NIH - Xenopus Gene Collection (XGC) project"/>
        </authorList>
    </citation>
    <scope>NUCLEOTIDE SEQUENCE [LARGE SCALE MRNA]</scope>
    <source>
        <tissue>Egg</tissue>
    </source>
</reference>
<protein>
    <recommendedName>
        <fullName evidence="4">Cytochrome b-245 chaperone 1 homolog</fullName>
    </recommendedName>
    <alternativeName>
        <fullName evidence="1">Essential for reactive oxygen species protein</fullName>
        <shortName evidence="1">Eros</shortName>
    </alternativeName>
</protein>
<gene>
    <name type="primary">cybc1</name>
    <name evidence="1" type="synonym">eros</name>
</gene>
<dbReference type="EMBL" id="BC088908">
    <property type="protein sequence ID" value="AAH88908.1"/>
    <property type="molecule type" value="mRNA"/>
</dbReference>
<dbReference type="RefSeq" id="NP_001088943.1">
    <property type="nucleotide sequence ID" value="NM_001095474.1"/>
</dbReference>
<dbReference type="SMR" id="Q5HZS2"/>
<dbReference type="DNASU" id="496319"/>
<dbReference type="GeneID" id="496319"/>
<dbReference type="KEGG" id="xla:496319"/>
<dbReference type="AGR" id="Xenbase:XB-GENE-6252094"/>
<dbReference type="CTD" id="496319"/>
<dbReference type="Xenbase" id="XB-GENE-6252094">
    <property type="gene designation" value="cybc1.L"/>
</dbReference>
<dbReference type="OrthoDB" id="10022724at2759"/>
<dbReference type="Proteomes" id="UP000186698">
    <property type="component" value="Chromosome 9_10L"/>
</dbReference>
<dbReference type="Bgee" id="496319">
    <property type="expression patterns" value="Expressed in spleen and 19 other cell types or tissues"/>
</dbReference>
<dbReference type="GO" id="GO:0005783">
    <property type="term" value="C:endoplasmic reticulum"/>
    <property type="evidence" value="ECO:0000250"/>
    <property type="project" value="UniProtKB"/>
</dbReference>
<dbReference type="GO" id="GO:0005789">
    <property type="term" value="C:endoplasmic reticulum membrane"/>
    <property type="evidence" value="ECO:0007669"/>
    <property type="project" value="UniProtKB-SubCell"/>
</dbReference>
<dbReference type="GO" id="GO:0045087">
    <property type="term" value="P:innate immune response"/>
    <property type="evidence" value="ECO:0000250"/>
    <property type="project" value="UniProtKB"/>
</dbReference>
<dbReference type="GO" id="GO:0045728">
    <property type="term" value="P:respiratory burst after phagocytosis"/>
    <property type="evidence" value="ECO:0000250"/>
    <property type="project" value="UniProtKB"/>
</dbReference>
<dbReference type="InterPro" id="IPR027846">
    <property type="entry name" value="Cybc1"/>
</dbReference>
<dbReference type="PANTHER" id="PTHR31837">
    <property type="entry name" value="CYTOCHROME B-245 CHAPERONE 1"/>
    <property type="match status" value="1"/>
</dbReference>
<dbReference type="PANTHER" id="PTHR31837:SF3">
    <property type="entry name" value="CYTOCHROME B-245 CHAPERONE 1"/>
    <property type="match status" value="1"/>
</dbReference>
<dbReference type="Pfam" id="PF15169">
    <property type="entry name" value="Cybc1_Eros"/>
    <property type="match status" value="1"/>
</dbReference>